<accession>Q5GWU3</accession>
<feature type="chain" id="PRO_0000233616" description="Small ribosomal subunit protein uS17">
    <location>
        <begin position="1"/>
        <end position="89"/>
    </location>
</feature>
<organism>
    <name type="scientific">Xanthomonas oryzae pv. oryzae (strain KACC10331 / KXO85)</name>
    <dbReference type="NCBI Taxonomy" id="291331"/>
    <lineage>
        <taxon>Bacteria</taxon>
        <taxon>Pseudomonadati</taxon>
        <taxon>Pseudomonadota</taxon>
        <taxon>Gammaproteobacteria</taxon>
        <taxon>Lysobacterales</taxon>
        <taxon>Lysobacteraceae</taxon>
        <taxon>Xanthomonas</taxon>
    </lineage>
</organism>
<sequence length="89" mass="10126">MSDNNEKQTLRTVEGRVVSNKMDKTVTVLVERQVKHALYGKYIKRSTKLHAHDADNACNEGDVVRVTEIAPMSKTKNWRVVEIVTRSAE</sequence>
<evidence type="ECO:0000255" key="1">
    <source>
        <dbReference type="HAMAP-Rule" id="MF_01345"/>
    </source>
</evidence>
<evidence type="ECO:0000305" key="2"/>
<protein>
    <recommendedName>
        <fullName evidence="1">Small ribosomal subunit protein uS17</fullName>
    </recommendedName>
    <alternativeName>
        <fullName evidence="2">30S ribosomal protein S17</fullName>
    </alternativeName>
</protein>
<keyword id="KW-1185">Reference proteome</keyword>
<keyword id="KW-0687">Ribonucleoprotein</keyword>
<keyword id="KW-0689">Ribosomal protein</keyword>
<keyword id="KW-0694">RNA-binding</keyword>
<keyword id="KW-0699">rRNA-binding</keyword>
<name>RS17_XANOR</name>
<dbReference type="EMBL" id="AE013598">
    <property type="protein sequence ID" value="AAW76828.1"/>
    <property type="molecule type" value="Genomic_DNA"/>
</dbReference>
<dbReference type="SMR" id="Q5GWU3"/>
<dbReference type="STRING" id="291331.XOO3574"/>
<dbReference type="KEGG" id="xoo:XOO3574"/>
<dbReference type="HOGENOM" id="CLU_073626_1_1_6"/>
<dbReference type="Proteomes" id="UP000006735">
    <property type="component" value="Chromosome"/>
</dbReference>
<dbReference type="GO" id="GO:0022627">
    <property type="term" value="C:cytosolic small ribosomal subunit"/>
    <property type="evidence" value="ECO:0007669"/>
    <property type="project" value="TreeGrafter"/>
</dbReference>
<dbReference type="GO" id="GO:0019843">
    <property type="term" value="F:rRNA binding"/>
    <property type="evidence" value="ECO:0007669"/>
    <property type="project" value="UniProtKB-UniRule"/>
</dbReference>
<dbReference type="GO" id="GO:0003735">
    <property type="term" value="F:structural constituent of ribosome"/>
    <property type="evidence" value="ECO:0007669"/>
    <property type="project" value="InterPro"/>
</dbReference>
<dbReference type="GO" id="GO:0006412">
    <property type="term" value="P:translation"/>
    <property type="evidence" value="ECO:0007669"/>
    <property type="project" value="UniProtKB-UniRule"/>
</dbReference>
<dbReference type="CDD" id="cd00364">
    <property type="entry name" value="Ribosomal_uS17"/>
    <property type="match status" value="1"/>
</dbReference>
<dbReference type="FunFam" id="2.40.50.140:FF:000204">
    <property type="entry name" value="30S ribosomal protein S17"/>
    <property type="match status" value="1"/>
</dbReference>
<dbReference type="Gene3D" id="2.40.50.140">
    <property type="entry name" value="Nucleic acid-binding proteins"/>
    <property type="match status" value="1"/>
</dbReference>
<dbReference type="HAMAP" id="MF_01345_B">
    <property type="entry name" value="Ribosomal_uS17_B"/>
    <property type="match status" value="1"/>
</dbReference>
<dbReference type="InterPro" id="IPR012340">
    <property type="entry name" value="NA-bd_OB-fold"/>
</dbReference>
<dbReference type="InterPro" id="IPR000266">
    <property type="entry name" value="Ribosomal_uS17"/>
</dbReference>
<dbReference type="InterPro" id="IPR019984">
    <property type="entry name" value="Ribosomal_uS17_bact/chlr"/>
</dbReference>
<dbReference type="NCBIfam" id="NF004123">
    <property type="entry name" value="PRK05610.1"/>
    <property type="match status" value="1"/>
</dbReference>
<dbReference type="NCBIfam" id="TIGR03635">
    <property type="entry name" value="uS17_bact"/>
    <property type="match status" value="1"/>
</dbReference>
<dbReference type="PANTHER" id="PTHR10744">
    <property type="entry name" value="40S RIBOSOMAL PROTEIN S11 FAMILY MEMBER"/>
    <property type="match status" value="1"/>
</dbReference>
<dbReference type="PANTHER" id="PTHR10744:SF1">
    <property type="entry name" value="SMALL RIBOSOMAL SUBUNIT PROTEIN US17M"/>
    <property type="match status" value="1"/>
</dbReference>
<dbReference type="Pfam" id="PF00366">
    <property type="entry name" value="Ribosomal_S17"/>
    <property type="match status" value="1"/>
</dbReference>
<dbReference type="PRINTS" id="PR00973">
    <property type="entry name" value="RIBOSOMALS17"/>
</dbReference>
<dbReference type="SUPFAM" id="SSF50249">
    <property type="entry name" value="Nucleic acid-binding proteins"/>
    <property type="match status" value="1"/>
</dbReference>
<comment type="function">
    <text evidence="1">One of the primary rRNA binding proteins, it binds specifically to the 5'-end of 16S ribosomal RNA.</text>
</comment>
<comment type="subunit">
    <text evidence="1">Part of the 30S ribosomal subunit.</text>
</comment>
<comment type="similarity">
    <text evidence="1">Belongs to the universal ribosomal protein uS17 family.</text>
</comment>
<gene>
    <name evidence="1" type="primary">rpsQ</name>
    <name type="ordered locus">XOO3574</name>
</gene>
<proteinExistence type="inferred from homology"/>
<reference key="1">
    <citation type="journal article" date="2005" name="Nucleic Acids Res.">
        <title>The genome sequence of Xanthomonas oryzae pathovar oryzae KACC10331, the bacterial blight pathogen of rice.</title>
        <authorList>
            <person name="Lee B.-M."/>
            <person name="Park Y.-J."/>
            <person name="Park D.-S."/>
            <person name="Kang H.-W."/>
            <person name="Kim J.-G."/>
            <person name="Song E.-S."/>
            <person name="Park I.-C."/>
            <person name="Yoon U.-H."/>
            <person name="Hahn J.-H."/>
            <person name="Koo B.-S."/>
            <person name="Lee G.-B."/>
            <person name="Kim H."/>
            <person name="Park H.-S."/>
            <person name="Yoon K.-O."/>
            <person name="Kim J.-H."/>
            <person name="Jung C.-H."/>
            <person name="Koh N.-H."/>
            <person name="Seo J.-S."/>
            <person name="Go S.-J."/>
        </authorList>
    </citation>
    <scope>NUCLEOTIDE SEQUENCE [LARGE SCALE GENOMIC DNA]</scope>
    <source>
        <strain>KACC10331 / KXO85</strain>
    </source>
</reference>